<keyword id="KW-0002">3D-structure</keyword>
<keyword id="KW-0031">Aminopeptidase</keyword>
<keyword id="KW-0378">Hydrolase</keyword>
<keyword id="KW-0645">Protease</keyword>
<keyword id="KW-1185">Reference proteome</keyword>
<organism>
    <name type="scientific">Thermoplasma acidophilum (strain ATCC 25905 / DSM 1728 / JCM 9062 / NBRC 15155 / AMRC-C165)</name>
    <dbReference type="NCBI Taxonomy" id="273075"/>
    <lineage>
        <taxon>Archaea</taxon>
        <taxon>Methanobacteriati</taxon>
        <taxon>Thermoplasmatota</taxon>
        <taxon>Thermoplasmata</taxon>
        <taxon>Thermoplasmatales</taxon>
        <taxon>Thermoplasmataceae</taxon>
        <taxon>Thermoplasma</taxon>
    </lineage>
</organism>
<protein>
    <recommendedName>
        <fullName>Proline iminopeptidase</fullName>
        <shortName>PIP</shortName>
        <ecNumber>3.4.11.5</ecNumber>
    </recommendedName>
    <alternativeName>
        <fullName>Prolyl aminopeptidase</fullName>
        <shortName>PAP</shortName>
    </alternativeName>
    <alternativeName>
        <fullName>Tricorn protease-interacting factor F1</fullName>
    </alternativeName>
</protein>
<evidence type="ECO:0000250" key="1"/>
<evidence type="ECO:0000305" key="2"/>
<evidence type="ECO:0007829" key="3">
    <source>
        <dbReference type="PDB" id="1MTZ"/>
    </source>
</evidence>
<evidence type="ECO:0007829" key="4">
    <source>
        <dbReference type="PDB" id="1XRP"/>
    </source>
</evidence>
<evidence type="ECO:0007829" key="5">
    <source>
        <dbReference type="PDB" id="1XRQ"/>
    </source>
</evidence>
<reference key="1">
    <citation type="journal article" date="1996" name="FEBS Lett.">
        <title>Tricorn protease (TRI) interacting factor 1 from Thermoplasma acidophilum is a proline iminopeptidase.</title>
        <authorList>
            <person name="Tamura T."/>
            <person name="Tamura N."/>
            <person name="Lottspeich F."/>
            <person name="Baumeister W."/>
        </authorList>
    </citation>
    <scope>NUCLEOTIDE SEQUENCE [GENOMIC DNA]</scope>
    <scope>CHARACTERIZATION</scope>
    <source>
        <strain>ATCC 25905 / DSM 1728 / JCM 9062 / NBRC 15155 / AMRC-C165</strain>
    </source>
</reference>
<reference key="2">
    <citation type="journal article" date="2000" name="Nature">
        <title>The genome sequence of the thermoacidophilic scavenger Thermoplasma acidophilum.</title>
        <authorList>
            <person name="Ruepp A."/>
            <person name="Graml W."/>
            <person name="Santos-Martinez M.-L."/>
            <person name="Koretke K.K."/>
            <person name="Volker C."/>
            <person name="Mewes H.-W."/>
            <person name="Frishman D."/>
            <person name="Stocker S."/>
            <person name="Lupas A.N."/>
            <person name="Baumeister W."/>
        </authorList>
    </citation>
    <scope>NUCLEOTIDE SEQUENCE [LARGE SCALE GENOMIC DNA]</scope>
    <source>
        <strain>ATCC 25905 / DSM 1728 / JCM 9062 / NBRC 15155 / AMRC-C165</strain>
    </source>
</reference>
<reference key="3">
    <citation type="journal article" date="2002" name="EMBO J.">
        <title>Structures of the tricorn-interacting aminopeptidase F1 with different ligands explain its catalytic mechanism.</title>
        <authorList>
            <person name="Goettig P."/>
            <person name="Groll M."/>
            <person name="Kim J.S."/>
            <person name="Huber R."/>
            <person name="Brandstetter H."/>
        </authorList>
    </citation>
    <scope>X-RAY CRYSTALLOGRAPHY (1.8 ANGSTROMS)</scope>
</reference>
<feature type="chain" id="PRO_0000080851" description="Proline iminopeptidase">
    <location>
        <begin position="1"/>
        <end position="293"/>
    </location>
</feature>
<feature type="active site" description="Nucleophile">
    <location>
        <position position="105"/>
    </location>
</feature>
<feature type="active site" evidence="1">
    <location>
        <position position="244"/>
    </location>
</feature>
<feature type="active site" description="Proton donor">
    <location>
        <position position="271"/>
    </location>
</feature>
<feature type="strand" evidence="3">
    <location>
        <begin position="6"/>
        <end position="12"/>
    </location>
</feature>
<feature type="strand" evidence="3">
    <location>
        <begin position="15"/>
        <end position="22"/>
    </location>
</feature>
<feature type="strand" evidence="3">
    <location>
        <begin position="28"/>
        <end position="34"/>
    </location>
</feature>
<feature type="turn" evidence="3">
    <location>
        <begin position="37"/>
        <end position="39"/>
    </location>
</feature>
<feature type="helix" evidence="3">
    <location>
        <begin position="43"/>
        <end position="54"/>
    </location>
</feature>
<feature type="strand" evidence="3">
    <location>
        <begin position="56"/>
        <end position="61"/>
    </location>
</feature>
<feature type="helix" evidence="3">
    <location>
        <begin position="74"/>
        <end position="76"/>
    </location>
</feature>
<feature type="helix" evidence="3">
    <location>
        <begin position="79"/>
        <end position="94"/>
    </location>
</feature>
<feature type="strand" evidence="3">
    <location>
        <begin position="99"/>
        <end position="104"/>
    </location>
</feature>
<feature type="helix" evidence="3">
    <location>
        <begin position="106"/>
        <end position="118"/>
    </location>
</feature>
<feature type="helix" evidence="3">
    <location>
        <begin position="119"/>
        <end position="121"/>
    </location>
</feature>
<feature type="strand" evidence="3">
    <location>
        <begin position="122"/>
        <end position="129"/>
    </location>
</feature>
<feature type="helix" evidence="3">
    <location>
        <begin position="134"/>
        <end position="146"/>
    </location>
</feature>
<feature type="helix" evidence="3">
    <location>
        <begin position="150"/>
        <end position="162"/>
    </location>
</feature>
<feature type="helix" evidence="3">
    <location>
        <begin position="168"/>
        <end position="181"/>
    </location>
</feature>
<feature type="strand" evidence="4">
    <location>
        <begin position="185"/>
        <end position="187"/>
    </location>
</feature>
<feature type="helix" evidence="3">
    <location>
        <begin position="190"/>
        <end position="201"/>
    </location>
</feature>
<feature type="helix" evidence="3">
    <location>
        <begin position="204"/>
        <end position="208"/>
    </location>
</feature>
<feature type="strand" evidence="5">
    <location>
        <begin position="211"/>
        <end position="214"/>
    </location>
</feature>
<feature type="turn" evidence="3">
    <location>
        <begin position="219"/>
        <end position="222"/>
    </location>
</feature>
<feature type="turn" evidence="3">
    <location>
        <begin position="226"/>
        <end position="228"/>
    </location>
</feature>
<feature type="helix" evidence="3">
    <location>
        <begin position="229"/>
        <end position="231"/>
    </location>
</feature>
<feature type="strand" evidence="3">
    <location>
        <begin position="236"/>
        <end position="241"/>
    </location>
</feature>
<feature type="helix" evidence="3">
    <location>
        <begin position="248"/>
        <end position="257"/>
    </location>
</feature>
<feature type="strand" evidence="3">
    <location>
        <begin position="262"/>
        <end position="266"/>
    </location>
</feature>
<feature type="helix" evidence="3">
    <location>
        <begin position="273"/>
        <end position="276"/>
    </location>
</feature>
<feature type="helix" evidence="3">
    <location>
        <begin position="278"/>
        <end position="290"/>
    </location>
</feature>
<dbReference type="EC" id="3.4.11.5"/>
<dbReference type="EMBL" id="U72710">
    <property type="protein sequence ID" value="AAC44636.1"/>
    <property type="molecule type" value="Genomic_DNA"/>
</dbReference>
<dbReference type="EMBL" id="AL445065">
    <property type="protein sequence ID" value="CAC11959.1"/>
    <property type="molecule type" value="Genomic_DNA"/>
</dbReference>
<dbReference type="PIR" id="T37465">
    <property type="entry name" value="T37465"/>
</dbReference>
<dbReference type="RefSeq" id="WP_010901242.1">
    <property type="nucleotide sequence ID" value="NC_002578.1"/>
</dbReference>
<dbReference type="PDB" id="1MT3">
    <property type="method" value="X-ray"/>
    <property type="resolution" value="2.00 A"/>
    <property type="chains" value="A=1-293"/>
</dbReference>
<dbReference type="PDB" id="1MTZ">
    <property type="method" value="X-ray"/>
    <property type="resolution" value="1.80 A"/>
    <property type="chains" value="A=1-293"/>
</dbReference>
<dbReference type="PDB" id="1MU0">
    <property type="method" value="X-ray"/>
    <property type="resolution" value="2.40 A"/>
    <property type="chains" value="A=1-293"/>
</dbReference>
<dbReference type="PDB" id="1XQV">
    <property type="method" value="X-ray"/>
    <property type="resolution" value="2.30 A"/>
    <property type="chains" value="A=1-293"/>
</dbReference>
<dbReference type="PDB" id="1XQW">
    <property type="method" value="X-ray"/>
    <property type="resolution" value="2.00 A"/>
    <property type="chains" value="A=1-293"/>
</dbReference>
<dbReference type="PDB" id="1XQX">
    <property type="method" value="X-ray"/>
    <property type="resolution" value="2.10 A"/>
    <property type="chains" value="A=1-293"/>
</dbReference>
<dbReference type="PDB" id="1XQY">
    <property type="method" value="X-ray"/>
    <property type="resolution" value="3.20 A"/>
    <property type="chains" value="A=1-293"/>
</dbReference>
<dbReference type="PDB" id="1XRL">
    <property type="method" value="X-ray"/>
    <property type="resolution" value="1.82 A"/>
    <property type="chains" value="A=1-293"/>
</dbReference>
<dbReference type="PDB" id="1XRM">
    <property type="method" value="X-ray"/>
    <property type="resolution" value="2.70 A"/>
    <property type="chains" value="A=1-293"/>
</dbReference>
<dbReference type="PDB" id="1XRN">
    <property type="method" value="X-ray"/>
    <property type="resolution" value="2.80 A"/>
    <property type="chains" value="A=1-293"/>
</dbReference>
<dbReference type="PDB" id="1XRO">
    <property type="method" value="X-ray"/>
    <property type="resolution" value="1.80 A"/>
    <property type="chains" value="A=1-293"/>
</dbReference>
<dbReference type="PDB" id="1XRP">
    <property type="method" value="X-ray"/>
    <property type="resolution" value="2.30 A"/>
    <property type="chains" value="A=1-293"/>
</dbReference>
<dbReference type="PDB" id="1XRQ">
    <property type="method" value="X-ray"/>
    <property type="resolution" value="2.80 A"/>
    <property type="chains" value="A=1-293"/>
</dbReference>
<dbReference type="PDB" id="1XRR">
    <property type="method" value="X-ray"/>
    <property type="resolution" value="2.40 A"/>
    <property type="chains" value="A=1-293"/>
</dbReference>
<dbReference type="PDBsum" id="1MT3"/>
<dbReference type="PDBsum" id="1MTZ"/>
<dbReference type="PDBsum" id="1MU0"/>
<dbReference type="PDBsum" id="1XQV"/>
<dbReference type="PDBsum" id="1XQW"/>
<dbReference type="PDBsum" id="1XQX"/>
<dbReference type="PDBsum" id="1XQY"/>
<dbReference type="PDBsum" id="1XRL"/>
<dbReference type="PDBsum" id="1XRM"/>
<dbReference type="PDBsum" id="1XRN"/>
<dbReference type="PDBsum" id="1XRO"/>
<dbReference type="PDBsum" id="1XRP"/>
<dbReference type="PDBsum" id="1XRQ"/>
<dbReference type="PDBsum" id="1XRR"/>
<dbReference type="SMR" id="P96084"/>
<dbReference type="FunCoup" id="P96084">
    <property type="interactions" value="42"/>
</dbReference>
<dbReference type="STRING" id="273075.gene:9572044"/>
<dbReference type="ESTHER" id="theac-pip">
    <property type="family name" value="Proline_iminopeptidase"/>
</dbReference>
<dbReference type="MEROPS" id="S33.005"/>
<dbReference type="PaxDb" id="273075-Ta0830"/>
<dbReference type="EnsemblBacteria" id="CAC11959">
    <property type="protein sequence ID" value="CAC11959"/>
    <property type="gene ID" value="CAC11959"/>
</dbReference>
<dbReference type="KEGG" id="tac:Ta0830"/>
<dbReference type="eggNOG" id="arCOG01648">
    <property type="taxonomic scope" value="Archaea"/>
</dbReference>
<dbReference type="HOGENOM" id="CLU_020336_15_1_2"/>
<dbReference type="InParanoid" id="P96084"/>
<dbReference type="OrthoDB" id="7466at2157"/>
<dbReference type="EvolutionaryTrace" id="P96084"/>
<dbReference type="Proteomes" id="UP000001024">
    <property type="component" value="Chromosome"/>
</dbReference>
<dbReference type="GO" id="GO:0016020">
    <property type="term" value="C:membrane"/>
    <property type="evidence" value="ECO:0007669"/>
    <property type="project" value="TreeGrafter"/>
</dbReference>
<dbReference type="GO" id="GO:0004177">
    <property type="term" value="F:aminopeptidase activity"/>
    <property type="evidence" value="ECO:0007669"/>
    <property type="project" value="UniProtKB-KW"/>
</dbReference>
<dbReference type="GO" id="GO:0006508">
    <property type="term" value="P:proteolysis"/>
    <property type="evidence" value="ECO:0007669"/>
    <property type="project" value="UniProtKB-KW"/>
</dbReference>
<dbReference type="Gene3D" id="3.40.50.1820">
    <property type="entry name" value="alpha/beta hydrolase"/>
    <property type="match status" value="1"/>
</dbReference>
<dbReference type="InterPro" id="IPR000073">
    <property type="entry name" value="AB_hydrolase_1"/>
</dbReference>
<dbReference type="InterPro" id="IPR029058">
    <property type="entry name" value="AB_hydrolase_fold"/>
</dbReference>
<dbReference type="InterPro" id="IPR050266">
    <property type="entry name" value="AB_hydrolase_sf"/>
</dbReference>
<dbReference type="InterPro" id="IPR002410">
    <property type="entry name" value="Peptidase_S33"/>
</dbReference>
<dbReference type="InterPro" id="IPR005945">
    <property type="entry name" value="Pro_imino_pep"/>
</dbReference>
<dbReference type="NCBIfam" id="TIGR01250">
    <property type="entry name" value="pro_imino_pep_2"/>
    <property type="match status" value="1"/>
</dbReference>
<dbReference type="NCBIfam" id="NF045948">
    <property type="entry name" value="ProImpepThrmp"/>
    <property type="match status" value="1"/>
</dbReference>
<dbReference type="PANTHER" id="PTHR43798:SF33">
    <property type="entry name" value="HYDROLASE, PUTATIVE (AFU_ORTHOLOGUE AFUA_2G14860)-RELATED"/>
    <property type="match status" value="1"/>
</dbReference>
<dbReference type="PANTHER" id="PTHR43798">
    <property type="entry name" value="MONOACYLGLYCEROL LIPASE"/>
    <property type="match status" value="1"/>
</dbReference>
<dbReference type="Pfam" id="PF00561">
    <property type="entry name" value="Abhydrolase_1"/>
    <property type="match status" value="1"/>
</dbReference>
<dbReference type="PIRSF" id="PIRSF005539">
    <property type="entry name" value="Pept_S33_TRI_F1"/>
    <property type="match status" value="1"/>
</dbReference>
<dbReference type="PRINTS" id="PR00111">
    <property type="entry name" value="ABHYDROLASE"/>
</dbReference>
<dbReference type="PRINTS" id="PR00793">
    <property type="entry name" value="PROAMNOPTASE"/>
</dbReference>
<dbReference type="SUPFAM" id="SSF53474">
    <property type="entry name" value="alpha/beta-Hydrolases"/>
    <property type="match status" value="1"/>
</dbReference>
<comment type="function">
    <text>Cleaves H-Pro-AMC as well as a wide spectrum of amino acid substrates and several peptide substrates without a proline at the N-terminus. Proteases F1, F2 and F3 degrade oligopeptides produced by Tricorn (themselves probably produced by the proteasome) yielding free amino acids.</text>
</comment>
<comment type="catalytic activity">
    <reaction>
        <text>Release of N-terminal proline from a peptide.</text>
        <dbReference type="EC" id="3.4.11.5"/>
    </reaction>
</comment>
<comment type="subunit">
    <text>Part of the tricorn proteolytic complex.</text>
</comment>
<comment type="similarity">
    <text evidence="2">Belongs to the peptidase S33 family.</text>
</comment>
<accession>P96084</accession>
<gene>
    <name type="primary">pip</name>
    <name type="ordered locus">Ta0830</name>
</gene>
<name>PIP_THEAC</name>
<sequence>MDQECIENYAKVNGIYIYYKLCKAPEEKAKLMTMHGGPGMSHDYLLSLRDMTKEGITVLFYDQFGCGRSEEPDQSKFTIDYGVEEAEALRSKLFGNEKVFLMGSSYGGALALAYAVKYQDHLKGLIVSGGLSSVPLTVKEMNRLIDELPAKYRDAIKKYGSSGSYENPEYQEAVNYFYHQHLLRSEDWPPEVLKSLEYAERRNVYRIMNGPNEFTITGTIKDWDITDKISAIKIPTLITVGEYDEVTPNVARVIHEKIAGSELHVFRDCSHLTMWEDREGYNKLLSDFILKHL</sequence>
<proteinExistence type="evidence at protein level"/>